<keyword id="KW-0963">Cytoplasm</keyword>
<keyword id="KW-0251">Elongation factor</keyword>
<keyword id="KW-0648">Protein biosynthesis</keyword>
<dbReference type="EMBL" id="CP000107">
    <property type="protein sequence ID" value="AAZ68345.1"/>
    <property type="molecule type" value="Genomic_DNA"/>
</dbReference>
<dbReference type="RefSeq" id="WP_011304423.1">
    <property type="nucleotide sequence ID" value="NC_007354.1"/>
</dbReference>
<dbReference type="SMR" id="Q3YSG0"/>
<dbReference type="FunCoup" id="Q3YSG0">
    <property type="interactions" value="326"/>
</dbReference>
<dbReference type="STRING" id="269484.Ecaj_0301"/>
<dbReference type="KEGG" id="ecn:Ecaj_0301"/>
<dbReference type="eggNOG" id="COG0231">
    <property type="taxonomic scope" value="Bacteria"/>
</dbReference>
<dbReference type="HOGENOM" id="CLU_074944_1_1_5"/>
<dbReference type="InParanoid" id="Q3YSG0"/>
<dbReference type="UniPathway" id="UPA00345"/>
<dbReference type="Proteomes" id="UP000000435">
    <property type="component" value="Chromosome"/>
</dbReference>
<dbReference type="GO" id="GO:0005737">
    <property type="term" value="C:cytoplasm"/>
    <property type="evidence" value="ECO:0007669"/>
    <property type="project" value="UniProtKB-SubCell"/>
</dbReference>
<dbReference type="GO" id="GO:0003746">
    <property type="term" value="F:translation elongation factor activity"/>
    <property type="evidence" value="ECO:0007669"/>
    <property type="project" value="UniProtKB-UniRule"/>
</dbReference>
<dbReference type="GO" id="GO:0043043">
    <property type="term" value="P:peptide biosynthetic process"/>
    <property type="evidence" value="ECO:0007669"/>
    <property type="project" value="InterPro"/>
</dbReference>
<dbReference type="FunFam" id="2.40.50.140:FF:000004">
    <property type="entry name" value="Elongation factor P"/>
    <property type="match status" value="1"/>
</dbReference>
<dbReference type="FunFam" id="2.40.50.140:FF:000009">
    <property type="entry name" value="Elongation factor P"/>
    <property type="match status" value="1"/>
</dbReference>
<dbReference type="Gene3D" id="2.30.30.30">
    <property type="match status" value="1"/>
</dbReference>
<dbReference type="Gene3D" id="2.40.50.140">
    <property type="entry name" value="Nucleic acid-binding proteins"/>
    <property type="match status" value="2"/>
</dbReference>
<dbReference type="HAMAP" id="MF_00141">
    <property type="entry name" value="EF_P"/>
    <property type="match status" value="1"/>
</dbReference>
<dbReference type="InterPro" id="IPR015365">
    <property type="entry name" value="Elong-fact-P_C"/>
</dbReference>
<dbReference type="InterPro" id="IPR012340">
    <property type="entry name" value="NA-bd_OB-fold"/>
</dbReference>
<dbReference type="InterPro" id="IPR014722">
    <property type="entry name" value="Rib_uL2_dom2"/>
</dbReference>
<dbReference type="InterPro" id="IPR020599">
    <property type="entry name" value="Transl_elong_fac_P/YeiP"/>
</dbReference>
<dbReference type="InterPro" id="IPR013185">
    <property type="entry name" value="Transl_elong_KOW-like"/>
</dbReference>
<dbReference type="InterPro" id="IPR001059">
    <property type="entry name" value="Transl_elong_P/YeiP_cen"/>
</dbReference>
<dbReference type="InterPro" id="IPR011768">
    <property type="entry name" value="Transl_elongation_fac_P"/>
</dbReference>
<dbReference type="InterPro" id="IPR008991">
    <property type="entry name" value="Translation_prot_SH3-like_sf"/>
</dbReference>
<dbReference type="NCBIfam" id="TIGR00038">
    <property type="entry name" value="efp"/>
    <property type="match status" value="1"/>
</dbReference>
<dbReference type="NCBIfam" id="NF001810">
    <property type="entry name" value="PRK00529.1"/>
    <property type="match status" value="1"/>
</dbReference>
<dbReference type="PANTHER" id="PTHR30053">
    <property type="entry name" value="ELONGATION FACTOR P"/>
    <property type="match status" value="1"/>
</dbReference>
<dbReference type="PANTHER" id="PTHR30053:SF14">
    <property type="entry name" value="TRANSLATION ELONGATION FACTOR KOW-LIKE DOMAIN-CONTAINING PROTEIN"/>
    <property type="match status" value="1"/>
</dbReference>
<dbReference type="Pfam" id="PF01132">
    <property type="entry name" value="EFP"/>
    <property type="match status" value="1"/>
</dbReference>
<dbReference type="Pfam" id="PF08207">
    <property type="entry name" value="EFP_N"/>
    <property type="match status" value="1"/>
</dbReference>
<dbReference type="Pfam" id="PF09285">
    <property type="entry name" value="Elong-fact-P_C"/>
    <property type="match status" value="1"/>
</dbReference>
<dbReference type="PIRSF" id="PIRSF005901">
    <property type="entry name" value="EF-P"/>
    <property type="match status" value="1"/>
</dbReference>
<dbReference type="SMART" id="SM01185">
    <property type="entry name" value="EFP"/>
    <property type="match status" value="1"/>
</dbReference>
<dbReference type="SMART" id="SM00841">
    <property type="entry name" value="Elong-fact-P_C"/>
    <property type="match status" value="1"/>
</dbReference>
<dbReference type="SUPFAM" id="SSF50249">
    <property type="entry name" value="Nucleic acid-binding proteins"/>
    <property type="match status" value="2"/>
</dbReference>
<dbReference type="SUPFAM" id="SSF50104">
    <property type="entry name" value="Translation proteins SH3-like domain"/>
    <property type="match status" value="1"/>
</dbReference>
<evidence type="ECO:0000255" key="1">
    <source>
        <dbReference type="HAMAP-Rule" id="MF_00141"/>
    </source>
</evidence>
<feature type="chain" id="PRO_1000010737" description="Elongation factor P">
    <location>
        <begin position="1"/>
        <end position="189"/>
    </location>
</feature>
<protein>
    <recommendedName>
        <fullName evidence="1">Elongation factor P</fullName>
        <shortName evidence="1">EF-P</shortName>
    </recommendedName>
</protein>
<name>EFP_EHRCJ</name>
<gene>
    <name evidence="1" type="primary">efp</name>
    <name type="ordered locus">Ecaj_0301</name>
</gene>
<accession>Q3YSG0</accession>
<organism>
    <name type="scientific">Ehrlichia canis (strain Jake)</name>
    <dbReference type="NCBI Taxonomy" id="269484"/>
    <lineage>
        <taxon>Bacteria</taxon>
        <taxon>Pseudomonadati</taxon>
        <taxon>Pseudomonadota</taxon>
        <taxon>Alphaproteobacteria</taxon>
        <taxon>Rickettsiales</taxon>
        <taxon>Anaplasmataceae</taxon>
        <taxon>Ehrlichia</taxon>
    </lineage>
</organism>
<sequence>MAERGSDIRPGHILEHNNALYLVVKVMHTQPGKGGAYIQAEMKNLKTGAKQYERFRTDGDIKRAIVDESDYQYIYGDGSMITVMHLKTYEQITISKDILGDKSIYLQDNIVITLVFYNGEIISAKVPDYVTLRVIETEAVIKGQTVSSSSYKVAMLENNQRISVPTFIKPGDKIVVYTPDDSYYERAKG</sequence>
<proteinExistence type="inferred from homology"/>
<reference key="1">
    <citation type="journal article" date="2006" name="J. Bacteriol.">
        <title>The genome of the obligately intracellular bacterium Ehrlichia canis reveals themes of complex membrane structure and immune evasion strategies.</title>
        <authorList>
            <person name="Mavromatis K."/>
            <person name="Doyle C.K."/>
            <person name="Lykidis A."/>
            <person name="Ivanova N."/>
            <person name="Francino M.P."/>
            <person name="Chain P."/>
            <person name="Shin M."/>
            <person name="Malfatti S."/>
            <person name="Larimer F."/>
            <person name="Copeland A."/>
            <person name="Detter J.C."/>
            <person name="Land M."/>
            <person name="Richardson P.M."/>
            <person name="Yu X.J."/>
            <person name="Walker D.H."/>
            <person name="McBride J.W."/>
            <person name="Kyrpides N.C."/>
        </authorList>
    </citation>
    <scope>NUCLEOTIDE SEQUENCE [LARGE SCALE GENOMIC DNA]</scope>
    <source>
        <strain>Jake</strain>
    </source>
</reference>
<comment type="function">
    <text evidence="1">Involved in peptide bond synthesis. Stimulates efficient translation and peptide-bond synthesis on native or reconstituted 70S ribosomes in vitro. Probably functions indirectly by altering the affinity of the ribosome for aminoacyl-tRNA, thus increasing their reactivity as acceptors for peptidyl transferase.</text>
</comment>
<comment type="pathway">
    <text evidence="1">Protein biosynthesis; polypeptide chain elongation.</text>
</comment>
<comment type="subcellular location">
    <subcellularLocation>
        <location evidence="1">Cytoplasm</location>
    </subcellularLocation>
</comment>
<comment type="similarity">
    <text evidence="1">Belongs to the elongation factor P family.</text>
</comment>